<organism>
    <name type="scientific">Bos taurus</name>
    <name type="common">Bovine</name>
    <dbReference type="NCBI Taxonomy" id="9913"/>
    <lineage>
        <taxon>Eukaryota</taxon>
        <taxon>Metazoa</taxon>
        <taxon>Chordata</taxon>
        <taxon>Craniata</taxon>
        <taxon>Vertebrata</taxon>
        <taxon>Euteleostomi</taxon>
        <taxon>Mammalia</taxon>
        <taxon>Eutheria</taxon>
        <taxon>Laurasiatheria</taxon>
        <taxon>Artiodactyla</taxon>
        <taxon>Ruminantia</taxon>
        <taxon>Pecora</taxon>
        <taxon>Bovidae</taxon>
        <taxon>Bovinae</taxon>
        <taxon>Bos</taxon>
    </lineage>
</organism>
<sequence length="501" mass="56547">MSALRRKFGDDYQVVTTSSSGSGLQPQGPGQGPQQQLVPKKKRQRFVDKNGRCNVQHGNLGSETSRYLSDLFTTLVDLKWRWNLFIFILTYTVAWLFMASMWWVIAYTRGDLNKAHVGNYTPCVANVYNFPSAFLFFIETEATIGYGYRYITDKCPEGIILFLFQSILGSIVDAFLIGCMFIKMSQPKKRAETLMFSEHAVISMRDGKLTLMFRVGNLRNSHMVSAQIRCKLLKSRQTPEGEFLPLDQLELDVGFSTGADQLFLVSPLTICHVIDAKSPFYDLSQRSMQSEQFEIVVILEGIVETTGMTCQARTSYTEDEVLWGHRFFPVISLEEGFFKVDYSQFHATFEVPTPPYSVKEQEEMLLMSSPLIAPAITNSKERHNSVECLDGLDDISTKLPSKLQKITGREDFPKKLLRMSSTTSEKAYSLGDLPMKLQRISSVPGNSEEKLVSKTTKMLSDPMSQSVADLPPKLQKMAGGATRMEGNLPAKLRKMNSDRFT</sequence>
<name>KCNJ3_BOVIN</name>
<gene>
    <name type="primary">KCNJ3</name>
    <name type="synonym">GIRK1</name>
</gene>
<accession>E1BNE9</accession>
<proteinExistence type="evidence at protein level"/>
<evidence type="ECO:0000250" key="1"/>
<evidence type="ECO:0000250" key="2">
    <source>
        <dbReference type="UniProtKB" id="P48549"/>
    </source>
</evidence>
<evidence type="ECO:0000250" key="3">
    <source>
        <dbReference type="UniProtKB" id="P63250"/>
    </source>
</evidence>
<evidence type="ECO:0000250" key="4">
    <source>
        <dbReference type="UniProtKB" id="P63251"/>
    </source>
</evidence>
<evidence type="ECO:0000255" key="5"/>
<evidence type="ECO:0000256" key="6">
    <source>
        <dbReference type="SAM" id="MobiDB-lite"/>
    </source>
</evidence>
<evidence type="ECO:0000305" key="7"/>
<comment type="function">
    <text evidence="2 4">Inward rectifier potassium channels are characterized by a greater tendency to allow potassium to flow into the cell rather than out of it. Their voltage dependence is regulated by the concentration of extracellular potassium; as external potassium is raised, the voltage range of the channel opening shifts to more positive voltages. The inward rectification is mainly due to the blockage of outward current by internal magnesium. This potassium channel is controlled by G proteins. This receptor plays a crucial role in regulating the heartbeat.</text>
</comment>
<comment type="catalytic activity">
    <reaction evidence="2">
        <text>K(+)(in) = K(+)(out)</text>
        <dbReference type="Rhea" id="RHEA:29463"/>
        <dbReference type="ChEBI" id="CHEBI:29103"/>
    </reaction>
</comment>
<comment type="activity regulation">
    <text evidence="4">Heteromultimer composed of KCNJ3/GIRK1 and KCNJ5/GIRK4 is activated by phosphatidylinositol 4,5 biphosphate (PtdIns(4,5)P2).</text>
</comment>
<comment type="subunit">
    <text evidence="2 3">Associates with KCNJ5/GIRK4 or KCNJ6/GIRK2 or KCNJ9/GIRK3 to form a G-protein activated heteromultimer pore-forming unit. The resulting inward current is much larger.</text>
</comment>
<comment type="interaction">
    <interactant intactId="EBI-9973959">
        <id>E1BNE9</id>
    </interactant>
    <interactant intactId="EBI-9973944">
        <id>F1MYR9</id>
        <label>KCNJ5</label>
    </interactant>
    <organismsDiffer>false</organismsDiffer>
    <experiments>2</experiments>
</comment>
<comment type="subcellular location">
    <subcellularLocation>
        <location evidence="5">Membrane</location>
        <topology evidence="5">Multi-pass membrane protein</topology>
    </subcellularLocation>
</comment>
<comment type="similarity">
    <text evidence="7">Belongs to the inward rectifier-type potassium channel (TC 1.A.2.1) family. KCNJ3 subfamily.</text>
</comment>
<dbReference type="EMBL" id="DAAA02004538">
    <property type="status" value="NOT_ANNOTATED_CDS"/>
    <property type="molecule type" value="Genomic_DNA"/>
</dbReference>
<dbReference type="EMBL" id="DAAA02004539">
    <property type="status" value="NOT_ANNOTATED_CDS"/>
    <property type="molecule type" value="Genomic_DNA"/>
</dbReference>
<dbReference type="EMBL" id="DAAA02004540">
    <property type="status" value="NOT_ANNOTATED_CDS"/>
    <property type="molecule type" value="Genomic_DNA"/>
</dbReference>
<dbReference type="EMBL" id="DAAA02004541">
    <property type="status" value="NOT_ANNOTATED_CDS"/>
    <property type="molecule type" value="Genomic_DNA"/>
</dbReference>
<dbReference type="EMBL" id="DAAA02004542">
    <property type="status" value="NOT_ANNOTATED_CDS"/>
    <property type="molecule type" value="Genomic_DNA"/>
</dbReference>
<dbReference type="EMBL" id="DAAA02004543">
    <property type="status" value="NOT_ANNOTATED_CDS"/>
    <property type="molecule type" value="Genomic_DNA"/>
</dbReference>
<dbReference type="RefSeq" id="NP_001179553.1">
    <property type="nucleotide sequence ID" value="NM_001192624.1"/>
</dbReference>
<dbReference type="SMR" id="E1BNE9"/>
<dbReference type="ComplexPortal" id="CPX-3275">
    <property type="entry name" value="I(KACh) inward rectifier potassium channel complex"/>
</dbReference>
<dbReference type="FunCoup" id="E1BNE9">
    <property type="interactions" value="579"/>
</dbReference>
<dbReference type="IntAct" id="E1BNE9">
    <property type="interactions" value="1"/>
</dbReference>
<dbReference type="STRING" id="9913.ENSBTAP00000008100"/>
<dbReference type="GlyCosmos" id="E1BNE9">
    <property type="glycosylation" value="1 site, No reported glycans"/>
</dbReference>
<dbReference type="GlyGen" id="E1BNE9">
    <property type="glycosylation" value="1 site"/>
</dbReference>
<dbReference type="PaxDb" id="9913-ENSBTAP00000008100"/>
<dbReference type="Ensembl" id="ENSBTAT00000008100.6">
    <property type="protein sequence ID" value="ENSBTAP00000008100.4"/>
    <property type="gene ID" value="ENSBTAG00000006159.6"/>
</dbReference>
<dbReference type="GeneID" id="526088"/>
<dbReference type="KEGG" id="bta:526088"/>
<dbReference type="CTD" id="3760"/>
<dbReference type="VEuPathDB" id="HostDB:ENSBTAG00000006159"/>
<dbReference type="VGNC" id="VGNC:30461">
    <property type="gene designation" value="KCNJ3"/>
</dbReference>
<dbReference type="eggNOG" id="KOG3827">
    <property type="taxonomic scope" value="Eukaryota"/>
</dbReference>
<dbReference type="GeneTree" id="ENSGT01080000257365"/>
<dbReference type="HOGENOM" id="CLU_022738_13_0_1"/>
<dbReference type="InParanoid" id="E1BNE9"/>
<dbReference type="OMA" id="ITNSKDR"/>
<dbReference type="OrthoDB" id="273257at2759"/>
<dbReference type="TreeFam" id="TF313676"/>
<dbReference type="Reactome" id="R-BTA-1296041">
    <property type="pathway name" value="Activation of G protein gated Potassium channels"/>
</dbReference>
<dbReference type="Reactome" id="R-BTA-997272">
    <property type="pathway name" value="Inhibition of voltage gated Ca2+ channels via Gbeta/gamma subunits"/>
</dbReference>
<dbReference type="Proteomes" id="UP000009136">
    <property type="component" value="Chromosome 2"/>
</dbReference>
<dbReference type="Bgee" id="ENSBTAG00000006159">
    <property type="expression patterns" value="Expressed in cardiac atrium and 37 other cell types or tissues"/>
</dbReference>
<dbReference type="GO" id="GO:1990566">
    <property type="term" value="C:I(KACh) inward rectifier potassium channel complex"/>
    <property type="evidence" value="ECO:0000353"/>
    <property type="project" value="ComplexPortal"/>
</dbReference>
<dbReference type="GO" id="GO:0098688">
    <property type="term" value="C:parallel fiber to Purkinje cell synapse"/>
    <property type="evidence" value="ECO:0007669"/>
    <property type="project" value="Ensembl"/>
</dbReference>
<dbReference type="GO" id="GO:0005886">
    <property type="term" value="C:plasma membrane"/>
    <property type="evidence" value="ECO:0000318"/>
    <property type="project" value="GO_Central"/>
</dbReference>
<dbReference type="GO" id="GO:0042734">
    <property type="term" value="C:presynaptic membrane"/>
    <property type="evidence" value="ECO:0007669"/>
    <property type="project" value="Ensembl"/>
</dbReference>
<dbReference type="GO" id="GO:0015467">
    <property type="term" value="F:G-protein activated inward rectifier potassium channel activity"/>
    <property type="evidence" value="ECO:0007669"/>
    <property type="project" value="Ensembl"/>
</dbReference>
<dbReference type="GO" id="GO:0005242">
    <property type="term" value="F:inward rectifier potassium channel activity"/>
    <property type="evidence" value="ECO:0000318"/>
    <property type="project" value="GO_Central"/>
</dbReference>
<dbReference type="GO" id="GO:0005546">
    <property type="term" value="F:phosphatidylinositol-4,5-bisphosphate binding"/>
    <property type="evidence" value="ECO:0000250"/>
    <property type="project" value="UniProtKB"/>
</dbReference>
<dbReference type="GO" id="GO:1990573">
    <property type="term" value="P:potassium ion import across plasma membrane"/>
    <property type="evidence" value="ECO:0000318"/>
    <property type="project" value="GO_Central"/>
</dbReference>
<dbReference type="GO" id="GO:0071805">
    <property type="term" value="P:potassium ion transmembrane transport"/>
    <property type="evidence" value="ECO:0000303"/>
    <property type="project" value="ComplexPortal"/>
</dbReference>
<dbReference type="GO" id="GO:0034765">
    <property type="term" value="P:regulation of monoatomic ion transmembrane transport"/>
    <property type="evidence" value="ECO:0000318"/>
    <property type="project" value="GO_Central"/>
</dbReference>
<dbReference type="FunFam" id="1.10.287.70:FF:000019">
    <property type="entry name" value="G protein-activated inward rectifier potassium channel 1"/>
    <property type="match status" value="1"/>
</dbReference>
<dbReference type="FunFam" id="2.60.40.1400:FF:000006">
    <property type="entry name" value="G protein-activated inward rectifier potassium channel 1"/>
    <property type="match status" value="1"/>
</dbReference>
<dbReference type="Gene3D" id="1.10.287.70">
    <property type="match status" value="1"/>
</dbReference>
<dbReference type="Gene3D" id="2.60.40.1400">
    <property type="entry name" value="G protein-activated inward rectifier potassium channel 1"/>
    <property type="match status" value="1"/>
</dbReference>
<dbReference type="InterPro" id="IPR014756">
    <property type="entry name" value="Ig_E-set"/>
</dbReference>
<dbReference type="InterPro" id="IPR041647">
    <property type="entry name" value="IRK_C"/>
</dbReference>
<dbReference type="InterPro" id="IPR016449">
    <property type="entry name" value="K_chnl_inward-rec_Kir"/>
</dbReference>
<dbReference type="InterPro" id="IPR003274">
    <property type="entry name" value="K_chnl_inward-rec_Kir3.1"/>
</dbReference>
<dbReference type="InterPro" id="IPR013518">
    <property type="entry name" value="K_chnl_inward-rec_Kir_cyto"/>
</dbReference>
<dbReference type="InterPro" id="IPR040445">
    <property type="entry name" value="Kir_TM"/>
</dbReference>
<dbReference type="PANTHER" id="PTHR11767:SF16">
    <property type="entry name" value="G PROTEIN-ACTIVATED INWARD RECTIFIER POTASSIUM CHANNEL 1"/>
    <property type="match status" value="1"/>
</dbReference>
<dbReference type="PANTHER" id="PTHR11767">
    <property type="entry name" value="INWARD RECTIFIER POTASSIUM CHANNEL"/>
    <property type="match status" value="1"/>
</dbReference>
<dbReference type="Pfam" id="PF01007">
    <property type="entry name" value="IRK"/>
    <property type="match status" value="1"/>
</dbReference>
<dbReference type="Pfam" id="PF17655">
    <property type="entry name" value="IRK_C"/>
    <property type="match status" value="1"/>
</dbReference>
<dbReference type="PRINTS" id="PR01327">
    <property type="entry name" value="KIR31CHANNEL"/>
</dbReference>
<dbReference type="PRINTS" id="PR01320">
    <property type="entry name" value="KIRCHANNEL"/>
</dbReference>
<dbReference type="SUPFAM" id="SSF81296">
    <property type="entry name" value="E set domains"/>
    <property type="match status" value="1"/>
</dbReference>
<dbReference type="SUPFAM" id="SSF81324">
    <property type="entry name" value="Voltage-gated potassium channels"/>
    <property type="match status" value="1"/>
</dbReference>
<keyword id="KW-0325">Glycoprotein</keyword>
<keyword id="KW-0407">Ion channel</keyword>
<keyword id="KW-0406">Ion transport</keyword>
<keyword id="KW-0472">Membrane</keyword>
<keyword id="KW-0597">Phosphoprotein</keyword>
<keyword id="KW-0630">Potassium</keyword>
<keyword id="KW-0633">Potassium transport</keyword>
<keyword id="KW-1185">Reference proteome</keyword>
<keyword id="KW-0812">Transmembrane</keyword>
<keyword id="KW-1133">Transmembrane helix</keyword>
<keyword id="KW-0813">Transport</keyword>
<keyword id="KW-0851">Voltage-gated channel</keyword>
<reference key="1">
    <citation type="journal article" date="2009" name="Genome Biol.">
        <title>A whole-genome assembly of the domestic cow, Bos taurus.</title>
        <authorList>
            <person name="Zimin A.V."/>
            <person name="Delcher A.L."/>
            <person name="Florea L."/>
            <person name="Kelley D.R."/>
            <person name="Schatz M.C."/>
            <person name="Puiu D."/>
            <person name="Hanrahan F."/>
            <person name="Pertea G."/>
            <person name="Van Tassell C.P."/>
            <person name="Sonstegard T.S."/>
            <person name="Marcais G."/>
            <person name="Roberts M."/>
            <person name="Subramanian P."/>
            <person name="Yorke J.A."/>
            <person name="Salzberg S.L."/>
        </authorList>
    </citation>
    <scope>NUCLEOTIDE SEQUENCE [LARGE SCALE GENOMIC DNA]</scope>
    <source>
        <strain>Hereford</strain>
    </source>
</reference>
<feature type="chain" id="PRO_0000431727" description="G protein-activated inward rectifier potassium channel 1">
    <location>
        <begin position="1"/>
        <end position="501"/>
    </location>
</feature>
<feature type="topological domain" description="Cytoplasmic" evidence="1">
    <location>
        <begin position="1"/>
        <end position="80"/>
    </location>
</feature>
<feature type="transmembrane region" description="Helical; Name=M1" evidence="1">
    <location>
        <begin position="81"/>
        <end position="105"/>
    </location>
</feature>
<feature type="topological domain" description="Extracellular" evidence="1">
    <location>
        <begin position="106"/>
        <end position="129"/>
    </location>
</feature>
<feature type="intramembrane region" description="Helical; Pore-forming; Name=H5" evidence="1">
    <location>
        <begin position="130"/>
        <end position="141"/>
    </location>
</feature>
<feature type="intramembrane region" description="Pore-forming" evidence="1">
    <location>
        <begin position="142"/>
        <end position="148"/>
    </location>
</feature>
<feature type="topological domain" description="Extracellular" evidence="1">
    <location>
        <begin position="149"/>
        <end position="157"/>
    </location>
</feature>
<feature type="transmembrane region" description="Helical; Name=M2" evidence="1">
    <location>
        <begin position="158"/>
        <end position="179"/>
    </location>
</feature>
<feature type="topological domain" description="Cytoplasmic" evidence="1">
    <location>
        <begin position="180"/>
        <end position="501"/>
    </location>
</feature>
<feature type="region of interest" description="Disordered" evidence="6">
    <location>
        <begin position="1"/>
        <end position="40"/>
    </location>
</feature>
<feature type="region of interest" description="Polyphosphoinositide (PIP2)-binding" evidence="4">
    <location>
        <begin position="182"/>
        <end position="209"/>
    </location>
</feature>
<feature type="short sequence motif" description="Selectivity filter" evidence="1">
    <location>
        <begin position="143"/>
        <end position="148"/>
    </location>
</feature>
<feature type="compositionally biased region" description="Low complexity" evidence="6">
    <location>
        <begin position="18"/>
        <end position="37"/>
    </location>
</feature>
<feature type="site" description="Role in the control of polyamine-mediated channel gating and in the blocking by intracellular magnesium" evidence="1">
    <location>
        <position position="173"/>
    </location>
</feature>
<feature type="modified residue" description="Phosphoserine" evidence="3">
    <location>
        <position position="385"/>
    </location>
</feature>
<feature type="modified residue" description="Phosphoserine" evidence="3">
    <location>
        <position position="424"/>
    </location>
</feature>
<feature type="glycosylation site" description="N-linked (GlcNAc...) asparagine" evidence="2">
    <location>
        <position position="119"/>
    </location>
</feature>
<protein>
    <recommendedName>
        <fullName>G protein-activated inward rectifier potassium channel 1</fullName>
        <shortName>GIRK-1</shortName>
    </recommendedName>
    <alternativeName>
        <fullName>Inward rectifier K(+) channel Kir3.1</fullName>
    </alternativeName>
    <alternativeName>
        <fullName>Potassium channel, inwardly rectifying subfamily J member 3</fullName>
    </alternativeName>
</protein>